<comment type="function">
    <text evidence="2">Together with PML, this tumor suppressor is a major constituent of the PML bodies, a subnuclear organelle involved in a large number of physiological processes including cell growth, differentiation and apoptosis. Functions as a transcriptional coactivator of ETS1 and ETS2. Under certain conditions, it may also act as a corepressor of ETS1 preventing its binding to DNA. Through the regulation of ETS1 it may play a role in angiogenesis, controlling endothelial cell motility and invasion. Through interaction with the MRN complex it may be involved in the regulation of telomeres lengthening. May also regulate TP53-mediated transcription and through CASP8AP2, regulate FAS-mediated apoptosis. May also play a role in infection by viruses through mechanisms that may involve chromatin and/or transcriptional regulation (By similarity).</text>
</comment>
<comment type="subunit">
    <text evidence="2">Homodimer. Interacts with members of the HP1 family of nonhistone chromosomal protein, such as CBX5 and CBX3 via the PxVxL motif. Interacts with ETS1; the interaction is direct and modulates ETS1 transcriptional activity. Interacts with the MRN complex which is composed of two heterodimers RAD50/MRE11 associated with a single NBN; recruits the complex to PML-related bodies. Interacts with HIPK2; positively regulates TP53-dependent transcription. Interacts with CASP8AP2; may negatively regulate CASP8AP2 export from the nucleus to the cytoplasm (By similarity).</text>
</comment>
<comment type="subcellular location">
    <subcellularLocation>
        <location evidence="2">Nucleus</location>
    </subcellularLocation>
    <subcellularLocation>
        <location evidence="2">Nucleus</location>
        <location evidence="2">PML body</location>
    </subcellularLocation>
    <subcellularLocation>
        <location evidence="2">Nucleus</location>
        <location evidence="2">Nuclear body</location>
    </subcellularLocation>
    <subcellularLocation>
        <location evidence="2">Cytoplasm</location>
    </subcellularLocation>
    <text evidence="2">Accumulates in the cytoplasm upon FAS activation.</text>
</comment>
<comment type="PTM">
    <text evidence="1">Sumoylated. Sumoylated with SUMO1. Sumoylation depends on a functional nuclear localization signal but is not necessary for nuclear import or nuclear body targeting. Sumoylation may stabilize the interaction with CBX5 (By similarity).</text>
</comment>
<comment type="PTM">
    <text evidence="1">Phosphorylated.</text>
</comment>
<accession>Q9N1Q5</accession>
<proteinExistence type="evidence at transcript level"/>
<feature type="chain" id="PRO_0000074097" description="Nuclear autoantigen Sp-100">
    <location>
        <begin position="1" status="less than"/>
        <end position="242" status="greater than"/>
    </location>
</feature>
<feature type="domain" description="SAND" evidence="4">
    <location>
        <begin position="1" status="less than"/>
        <end position="50"/>
    </location>
</feature>
<feature type="DNA-binding region" description="HMG box 1" evidence="5">
    <location>
        <begin position="51"/>
        <end position="127"/>
    </location>
</feature>
<feature type="DNA-binding region" description="HMG box 2" evidence="5">
    <location>
        <begin position="143"/>
        <end position="211"/>
    </location>
</feature>
<feature type="region of interest" description="Disordered" evidence="6">
    <location>
        <begin position="205"/>
        <end position="242"/>
    </location>
</feature>
<feature type="short sequence motif" description="Nuclear localization signal" evidence="3">
    <location>
        <begin position="91"/>
        <end position="108"/>
    </location>
</feature>
<feature type="compositionally biased region" description="Basic residues" evidence="6">
    <location>
        <begin position="218"/>
        <end position="231"/>
    </location>
</feature>
<feature type="non-terminal residue">
    <location>
        <position position="1"/>
    </location>
</feature>
<feature type="non-terminal residue">
    <location>
        <position position="242"/>
    </location>
</feature>
<reference key="1">
    <citation type="journal article" date="2000" name="Genomics">
        <title>Back to the roots of a new exon-the molecular archaeology of a SP100 splice variant.</title>
        <authorList>
            <person name="Rogalla P."/>
            <person name="Kazmierczak B."/>
            <person name="Flohr A.M."/>
            <person name="Hauke S."/>
            <person name="Bullerdiek J."/>
        </authorList>
    </citation>
    <scope>NUCLEOTIDE SEQUENCE [MRNA]</scope>
    <source>
        <tissue>Fibroblast</tissue>
    </source>
</reference>
<evidence type="ECO:0000250" key="1"/>
<evidence type="ECO:0000250" key="2">
    <source>
        <dbReference type="UniProtKB" id="P23497"/>
    </source>
</evidence>
<evidence type="ECO:0000255" key="3"/>
<evidence type="ECO:0000255" key="4">
    <source>
        <dbReference type="PROSITE-ProRule" id="PRU00185"/>
    </source>
</evidence>
<evidence type="ECO:0000255" key="5">
    <source>
        <dbReference type="PROSITE-ProRule" id="PRU00267"/>
    </source>
</evidence>
<evidence type="ECO:0000256" key="6">
    <source>
        <dbReference type="SAM" id="MobiDB-lite"/>
    </source>
</evidence>
<sequence length="242" mass="28174">KKCIQSEDKKWFTPREFEIEGDRRASKNWKLSIRCGGYTLKFLMENKLLPEPPSTRKKRILKSHNNTLVDPCAVHKKKNPDASVNLSEFLKKCSEMWKTIFAKEKGKFEDMAKADKAHYEREMKTYIPSKGEKKKKFKDPNAPKRPPLAFFLFCSEYRPKIKGEHPGLSIDDVVKKLAEMWNNTAAADKQFYEKKAAKLKEKYKKDIAADRAKGKPNSAKKRVVKAEKSKKKKEEEEDEVDE</sequence>
<name>SP100_HYLLA</name>
<dbReference type="EMBL" id="AF169948">
    <property type="protein sequence ID" value="AAF43110.1"/>
    <property type="molecule type" value="mRNA"/>
</dbReference>
<dbReference type="SMR" id="Q9N1Q5"/>
<dbReference type="GO" id="GO:0005737">
    <property type="term" value="C:cytoplasm"/>
    <property type="evidence" value="ECO:0000250"/>
    <property type="project" value="UniProtKB"/>
</dbReference>
<dbReference type="GO" id="GO:0016605">
    <property type="term" value="C:PML body"/>
    <property type="evidence" value="ECO:0000250"/>
    <property type="project" value="UniProtKB"/>
</dbReference>
<dbReference type="GO" id="GO:0003677">
    <property type="term" value="F:DNA binding"/>
    <property type="evidence" value="ECO:0007669"/>
    <property type="project" value="UniProtKB-KW"/>
</dbReference>
<dbReference type="GO" id="GO:0010596">
    <property type="term" value="P:negative regulation of endothelial cell migration"/>
    <property type="evidence" value="ECO:0000250"/>
    <property type="project" value="UniProtKB"/>
</dbReference>
<dbReference type="GO" id="GO:0046826">
    <property type="term" value="P:negative regulation of protein export from nucleus"/>
    <property type="evidence" value="ECO:0000250"/>
    <property type="project" value="UniProtKB"/>
</dbReference>
<dbReference type="GO" id="GO:0045765">
    <property type="term" value="P:regulation of angiogenesis"/>
    <property type="evidence" value="ECO:0000250"/>
    <property type="project" value="UniProtKB"/>
</dbReference>
<dbReference type="GO" id="GO:1902041">
    <property type="term" value="P:regulation of extrinsic apoptotic signaling pathway via death domain receptors"/>
    <property type="evidence" value="ECO:0000250"/>
    <property type="project" value="UniProtKB"/>
</dbReference>
<dbReference type="GO" id="GO:1902044">
    <property type="term" value="P:regulation of Fas signaling pathway"/>
    <property type="evidence" value="ECO:0000250"/>
    <property type="project" value="UniProtKB"/>
</dbReference>
<dbReference type="GO" id="GO:0006357">
    <property type="term" value="P:regulation of transcription by RNA polymerase II"/>
    <property type="evidence" value="ECO:0007669"/>
    <property type="project" value="TreeGrafter"/>
</dbReference>
<dbReference type="GO" id="GO:0000723">
    <property type="term" value="P:telomere maintenance"/>
    <property type="evidence" value="ECO:0000250"/>
    <property type="project" value="UniProtKB"/>
</dbReference>
<dbReference type="CDD" id="cd21978">
    <property type="entry name" value="HMG-box_HMGB_rpt1"/>
    <property type="match status" value="1"/>
</dbReference>
<dbReference type="CDD" id="cd21979">
    <property type="entry name" value="HMG-box_HMGB_rpt2"/>
    <property type="match status" value="1"/>
</dbReference>
<dbReference type="FunFam" id="1.10.30.10:FF:000015">
    <property type="entry name" value="high mobility group protein B1"/>
    <property type="match status" value="1"/>
</dbReference>
<dbReference type="FunFam" id="1.10.30.10:FF:000050">
    <property type="entry name" value="Nuclear autoantigen Sp-100"/>
    <property type="match status" value="1"/>
</dbReference>
<dbReference type="FunFam" id="3.10.390.10:FF:000012">
    <property type="entry name" value="Nuclear autoantigen Sp-100"/>
    <property type="match status" value="1"/>
</dbReference>
<dbReference type="Gene3D" id="1.10.30.10">
    <property type="entry name" value="High mobility group box domain"/>
    <property type="match status" value="2"/>
</dbReference>
<dbReference type="Gene3D" id="3.10.390.10">
    <property type="entry name" value="SAND domain-like"/>
    <property type="match status" value="1"/>
</dbReference>
<dbReference type="InterPro" id="IPR009071">
    <property type="entry name" value="HMG_box_dom"/>
</dbReference>
<dbReference type="InterPro" id="IPR036910">
    <property type="entry name" value="HMG_box_dom_sf"/>
</dbReference>
<dbReference type="InterPro" id="IPR050342">
    <property type="entry name" value="HMGB"/>
</dbReference>
<dbReference type="InterPro" id="IPR010919">
    <property type="entry name" value="SAND-like_dom_sf"/>
</dbReference>
<dbReference type="InterPro" id="IPR000770">
    <property type="entry name" value="SAND_dom"/>
</dbReference>
<dbReference type="PANTHER" id="PTHR48112:SF18">
    <property type="match status" value="1"/>
</dbReference>
<dbReference type="PANTHER" id="PTHR48112">
    <property type="entry name" value="HIGH MOBILITY GROUP PROTEIN DSP1"/>
    <property type="match status" value="1"/>
</dbReference>
<dbReference type="Pfam" id="PF00505">
    <property type="entry name" value="HMG_box"/>
    <property type="match status" value="1"/>
</dbReference>
<dbReference type="Pfam" id="PF09011">
    <property type="entry name" value="HMG_box_2"/>
    <property type="match status" value="1"/>
</dbReference>
<dbReference type="Pfam" id="PF01342">
    <property type="entry name" value="SAND"/>
    <property type="match status" value="1"/>
</dbReference>
<dbReference type="PRINTS" id="PR00886">
    <property type="entry name" value="HIGHMOBLTY12"/>
</dbReference>
<dbReference type="SMART" id="SM00398">
    <property type="entry name" value="HMG"/>
    <property type="match status" value="2"/>
</dbReference>
<dbReference type="SMART" id="SM00258">
    <property type="entry name" value="SAND"/>
    <property type="match status" value="1"/>
</dbReference>
<dbReference type="SUPFAM" id="SSF47095">
    <property type="entry name" value="HMG-box"/>
    <property type="match status" value="2"/>
</dbReference>
<dbReference type="SUPFAM" id="SSF63763">
    <property type="entry name" value="SAND domain-like"/>
    <property type="match status" value="1"/>
</dbReference>
<dbReference type="PROSITE" id="PS50118">
    <property type="entry name" value="HMG_BOX_2"/>
    <property type="match status" value="2"/>
</dbReference>
<dbReference type="PROSITE" id="PS50864">
    <property type="entry name" value="SAND"/>
    <property type="match status" value="1"/>
</dbReference>
<protein>
    <recommendedName>
        <fullName>Nuclear autoantigen Sp-100</fullName>
    </recommendedName>
    <alternativeName>
        <fullName>Nuclear dot-associated Sp100 protein</fullName>
    </alternativeName>
    <alternativeName>
        <fullName>Speckled 100 kDa</fullName>
    </alternativeName>
</protein>
<organism>
    <name type="scientific">Hylobates lar</name>
    <name type="common">Lar gibbon</name>
    <name type="synonym">White-handed gibbon</name>
    <dbReference type="NCBI Taxonomy" id="9580"/>
    <lineage>
        <taxon>Eukaryota</taxon>
        <taxon>Metazoa</taxon>
        <taxon>Chordata</taxon>
        <taxon>Craniata</taxon>
        <taxon>Vertebrata</taxon>
        <taxon>Euteleostomi</taxon>
        <taxon>Mammalia</taxon>
        <taxon>Eutheria</taxon>
        <taxon>Euarchontoglires</taxon>
        <taxon>Primates</taxon>
        <taxon>Haplorrhini</taxon>
        <taxon>Catarrhini</taxon>
        <taxon>Hylobatidae</taxon>
        <taxon>Hylobates</taxon>
    </lineage>
</organism>
<keyword id="KW-0175">Coiled coil</keyword>
<keyword id="KW-0963">Cytoplasm</keyword>
<keyword id="KW-0238">DNA-binding</keyword>
<keyword id="KW-0539">Nucleus</keyword>
<keyword id="KW-0597">Phosphoprotein</keyword>
<keyword id="KW-0677">Repeat</keyword>
<keyword id="KW-0804">Transcription</keyword>
<keyword id="KW-0805">Transcription regulation</keyword>
<keyword id="KW-0832">Ubl conjugation</keyword>
<gene>
    <name type="primary">SP100</name>
</gene>